<organism>
    <name type="scientific">Rhodopseudomonas palustris (strain BisA53)</name>
    <dbReference type="NCBI Taxonomy" id="316055"/>
    <lineage>
        <taxon>Bacteria</taxon>
        <taxon>Pseudomonadati</taxon>
        <taxon>Pseudomonadota</taxon>
        <taxon>Alphaproteobacteria</taxon>
        <taxon>Hyphomicrobiales</taxon>
        <taxon>Nitrobacteraceae</taxon>
        <taxon>Rhodopseudomonas</taxon>
    </lineage>
</organism>
<name>GATB_RHOP5</name>
<keyword id="KW-0067">ATP-binding</keyword>
<keyword id="KW-0436">Ligase</keyword>
<keyword id="KW-0547">Nucleotide-binding</keyword>
<keyword id="KW-0648">Protein biosynthesis</keyword>
<feature type="chain" id="PRO_1000016029" description="Aspartyl/glutamyl-tRNA(Asn/Gln) amidotransferase subunit B">
    <location>
        <begin position="1"/>
        <end position="494"/>
    </location>
</feature>
<protein>
    <recommendedName>
        <fullName evidence="1">Aspartyl/glutamyl-tRNA(Asn/Gln) amidotransferase subunit B</fullName>
        <shortName evidence="1">Asp/Glu-ADT subunit B</shortName>
        <ecNumber evidence="1">6.3.5.-</ecNumber>
    </recommendedName>
</protein>
<comment type="function">
    <text evidence="1">Allows the formation of correctly charged Asn-tRNA(Asn) or Gln-tRNA(Gln) through the transamidation of misacylated Asp-tRNA(Asn) or Glu-tRNA(Gln) in organisms which lack either or both of asparaginyl-tRNA or glutaminyl-tRNA synthetases. The reaction takes place in the presence of glutamine and ATP through an activated phospho-Asp-tRNA(Asn) or phospho-Glu-tRNA(Gln).</text>
</comment>
<comment type="catalytic activity">
    <reaction evidence="1">
        <text>L-glutamyl-tRNA(Gln) + L-glutamine + ATP + H2O = L-glutaminyl-tRNA(Gln) + L-glutamate + ADP + phosphate + H(+)</text>
        <dbReference type="Rhea" id="RHEA:17521"/>
        <dbReference type="Rhea" id="RHEA-COMP:9681"/>
        <dbReference type="Rhea" id="RHEA-COMP:9684"/>
        <dbReference type="ChEBI" id="CHEBI:15377"/>
        <dbReference type="ChEBI" id="CHEBI:15378"/>
        <dbReference type="ChEBI" id="CHEBI:29985"/>
        <dbReference type="ChEBI" id="CHEBI:30616"/>
        <dbReference type="ChEBI" id="CHEBI:43474"/>
        <dbReference type="ChEBI" id="CHEBI:58359"/>
        <dbReference type="ChEBI" id="CHEBI:78520"/>
        <dbReference type="ChEBI" id="CHEBI:78521"/>
        <dbReference type="ChEBI" id="CHEBI:456216"/>
    </reaction>
</comment>
<comment type="catalytic activity">
    <reaction evidence="1">
        <text>L-aspartyl-tRNA(Asn) + L-glutamine + ATP + H2O = L-asparaginyl-tRNA(Asn) + L-glutamate + ADP + phosphate + 2 H(+)</text>
        <dbReference type="Rhea" id="RHEA:14513"/>
        <dbReference type="Rhea" id="RHEA-COMP:9674"/>
        <dbReference type="Rhea" id="RHEA-COMP:9677"/>
        <dbReference type="ChEBI" id="CHEBI:15377"/>
        <dbReference type="ChEBI" id="CHEBI:15378"/>
        <dbReference type="ChEBI" id="CHEBI:29985"/>
        <dbReference type="ChEBI" id="CHEBI:30616"/>
        <dbReference type="ChEBI" id="CHEBI:43474"/>
        <dbReference type="ChEBI" id="CHEBI:58359"/>
        <dbReference type="ChEBI" id="CHEBI:78515"/>
        <dbReference type="ChEBI" id="CHEBI:78516"/>
        <dbReference type="ChEBI" id="CHEBI:456216"/>
    </reaction>
</comment>
<comment type="subunit">
    <text evidence="1">Heterotrimer of A, B and C subunits.</text>
</comment>
<comment type="similarity">
    <text evidence="1">Belongs to the GatB/GatE family. GatB subfamily.</text>
</comment>
<dbReference type="EC" id="6.3.5.-" evidence="1"/>
<dbReference type="EMBL" id="CP000463">
    <property type="protein sequence ID" value="ABJ07288.1"/>
    <property type="molecule type" value="Genomic_DNA"/>
</dbReference>
<dbReference type="SMR" id="Q07L96"/>
<dbReference type="STRING" id="316055.RPE_3356"/>
<dbReference type="KEGG" id="rpe:RPE_3356"/>
<dbReference type="eggNOG" id="COG0064">
    <property type="taxonomic scope" value="Bacteria"/>
</dbReference>
<dbReference type="HOGENOM" id="CLU_019240_0_0_5"/>
<dbReference type="OrthoDB" id="9804078at2"/>
<dbReference type="GO" id="GO:0050566">
    <property type="term" value="F:asparaginyl-tRNA synthase (glutamine-hydrolyzing) activity"/>
    <property type="evidence" value="ECO:0007669"/>
    <property type="project" value="RHEA"/>
</dbReference>
<dbReference type="GO" id="GO:0005524">
    <property type="term" value="F:ATP binding"/>
    <property type="evidence" value="ECO:0007669"/>
    <property type="project" value="UniProtKB-KW"/>
</dbReference>
<dbReference type="GO" id="GO:0050567">
    <property type="term" value="F:glutaminyl-tRNA synthase (glutamine-hydrolyzing) activity"/>
    <property type="evidence" value="ECO:0007669"/>
    <property type="project" value="UniProtKB-UniRule"/>
</dbReference>
<dbReference type="GO" id="GO:0070681">
    <property type="term" value="P:glutaminyl-tRNAGln biosynthesis via transamidation"/>
    <property type="evidence" value="ECO:0007669"/>
    <property type="project" value="TreeGrafter"/>
</dbReference>
<dbReference type="GO" id="GO:0006412">
    <property type="term" value="P:translation"/>
    <property type="evidence" value="ECO:0007669"/>
    <property type="project" value="UniProtKB-UniRule"/>
</dbReference>
<dbReference type="FunFam" id="1.10.10.410:FF:000001">
    <property type="entry name" value="Aspartyl/glutamyl-tRNA(Asn/Gln) amidotransferase subunit B"/>
    <property type="match status" value="1"/>
</dbReference>
<dbReference type="FunFam" id="1.10.150.380:FF:000001">
    <property type="entry name" value="Aspartyl/glutamyl-tRNA(Asn/Gln) amidotransferase subunit B"/>
    <property type="match status" value="1"/>
</dbReference>
<dbReference type="Gene3D" id="1.10.10.410">
    <property type="match status" value="1"/>
</dbReference>
<dbReference type="Gene3D" id="1.10.150.380">
    <property type="entry name" value="GatB domain, N-terminal subdomain"/>
    <property type="match status" value="1"/>
</dbReference>
<dbReference type="HAMAP" id="MF_00121">
    <property type="entry name" value="GatB"/>
    <property type="match status" value="1"/>
</dbReference>
<dbReference type="InterPro" id="IPR017959">
    <property type="entry name" value="Asn/Gln-tRNA_amidoTrfase_suB/E"/>
</dbReference>
<dbReference type="InterPro" id="IPR006075">
    <property type="entry name" value="Asn/Gln-tRNA_Trfase_suB/E_cat"/>
</dbReference>
<dbReference type="InterPro" id="IPR018027">
    <property type="entry name" value="Asn/Gln_amidotransferase"/>
</dbReference>
<dbReference type="InterPro" id="IPR003789">
    <property type="entry name" value="Asn/Gln_tRNA_amidoTrase-B-like"/>
</dbReference>
<dbReference type="InterPro" id="IPR004413">
    <property type="entry name" value="GatB"/>
</dbReference>
<dbReference type="InterPro" id="IPR042114">
    <property type="entry name" value="GatB_C_1"/>
</dbReference>
<dbReference type="InterPro" id="IPR023168">
    <property type="entry name" value="GatB_Yqey_C_2"/>
</dbReference>
<dbReference type="InterPro" id="IPR017958">
    <property type="entry name" value="Gln-tRNA_amidoTrfase_suB_CS"/>
</dbReference>
<dbReference type="InterPro" id="IPR014746">
    <property type="entry name" value="Gln_synth/guanido_kin_cat_dom"/>
</dbReference>
<dbReference type="NCBIfam" id="TIGR00133">
    <property type="entry name" value="gatB"/>
    <property type="match status" value="1"/>
</dbReference>
<dbReference type="NCBIfam" id="NF004012">
    <property type="entry name" value="PRK05477.1-2"/>
    <property type="match status" value="1"/>
</dbReference>
<dbReference type="NCBIfam" id="NF004014">
    <property type="entry name" value="PRK05477.1-4"/>
    <property type="match status" value="1"/>
</dbReference>
<dbReference type="NCBIfam" id="NF004015">
    <property type="entry name" value="PRK05477.1-5"/>
    <property type="match status" value="1"/>
</dbReference>
<dbReference type="PANTHER" id="PTHR11659">
    <property type="entry name" value="GLUTAMYL-TRNA GLN AMIDOTRANSFERASE SUBUNIT B MITOCHONDRIAL AND PROKARYOTIC PET112-RELATED"/>
    <property type="match status" value="1"/>
</dbReference>
<dbReference type="PANTHER" id="PTHR11659:SF0">
    <property type="entry name" value="GLUTAMYL-TRNA(GLN) AMIDOTRANSFERASE SUBUNIT B, MITOCHONDRIAL"/>
    <property type="match status" value="1"/>
</dbReference>
<dbReference type="Pfam" id="PF02934">
    <property type="entry name" value="GatB_N"/>
    <property type="match status" value="1"/>
</dbReference>
<dbReference type="Pfam" id="PF02637">
    <property type="entry name" value="GatB_Yqey"/>
    <property type="match status" value="1"/>
</dbReference>
<dbReference type="SMART" id="SM00845">
    <property type="entry name" value="GatB_Yqey"/>
    <property type="match status" value="1"/>
</dbReference>
<dbReference type="SUPFAM" id="SSF89095">
    <property type="entry name" value="GatB/YqeY motif"/>
    <property type="match status" value="1"/>
</dbReference>
<dbReference type="SUPFAM" id="SSF55931">
    <property type="entry name" value="Glutamine synthetase/guanido kinase"/>
    <property type="match status" value="1"/>
</dbReference>
<dbReference type="PROSITE" id="PS01234">
    <property type="entry name" value="GATB"/>
    <property type="match status" value="1"/>
</dbReference>
<gene>
    <name evidence="1" type="primary">gatB</name>
    <name type="ordered locus">RPE_3356</name>
</gene>
<proteinExistence type="inferred from homology"/>
<sequence length="494" mass="53470">MNAPVKPSKLIKGATGDWEVVIGLEVHAQVASNAKLFSGASTEFGGAPNAHVSLVDAAMPGMLPVINEECVAQAVRTGLGLNAQINLRSVFDRKNYFYPDLPQGYQISQYKSPVVGEGVVEVDLPDGEGISVGIERLHLEQDAGKLLHDQHPTSTFVDLNRSGVALMEIVSKPDIRSSEQAKAYVSKLRTILRYLGTCDGDMEKGSLRADVNVSVRKPGGPLGTRCEIKNVNSIRFIGQAIEYEARRQIGILEDGGAIVQETRLFDAGKGETRSMRSKEEAHDYRYFPDPDLLPLEFSQDYVDALKAKLPELPDAKKARFMAEFGLSLEDAGVLVAERESAEFYEAVLAALGNQPRDGKLAANWVINELFGRLNKEGRDIAASPVSAAQLATIVELIGEGTISGKIAKDLFEIVWCEGGDPRELVETRGMKQVTDLGAIEKVVDDIIQANPDKVAQAQAKPALMGWFVGQVMKSSGGKANPQSVNDLLKSKLGL</sequence>
<evidence type="ECO:0000255" key="1">
    <source>
        <dbReference type="HAMAP-Rule" id="MF_00121"/>
    </source>
</evidence>
<accession>Q07L96</accession>
<reference key="1">
    <citation type="submission" date="2006-09" db="EMBL/GenBank/DDBJ databases">
        <title>Complete sequence of Rhodopseudomonas palustris BisA53.</title>
        <authorList>
            <consortium name="US DOE Joint Genome Institute"/>
            <person name="Copeland A."/>
            <person name="Lucas S."/>
            <person name="Lapidus A."/>
            <person name="Barry K."/>
            <person name="Detter J.C."/>
            <person name="Glavina del Rio T."/>
            <person name="Hammon N."/>
            <person name="Israni S."/>
            <person name="Dalin E."/>
            <person name="Tice H."/>
            <person name="Pitluck S."/>
            <person name="Chain P."/>
            <person name="Malfatti S."/>
            <person name="Shin M."/>
            <person name="Vergez L."/>
            <person name="Schmutz J."/>
            <person name="Larimer F."/>
            <person name="Land M."/>
            <person name="Hauser L."/>
            <person name="Pelletier D.A."/>
            <person name="Kyrpides N."/>
            <person name="Kim E."/>
            <person name="Harwood C.S."/>
            <person name="Oda Y."/>
            <person name="Richardson P."/>
        </authorList>
    </citation>
    <scope>NUCLEOTIDE SEQUENCE [LARGE SCALE GENOMIC DNA]</scope>
    <source>
        <strain>BisA53</strain>
    </source>
</reference>